<sequence length="588" mass="65582">MGEKNGVIIRVTGPVVEAEGMAGSRMYESVRVGNDGLIGEIIILEGDRATIQVYEETIGLTPGEPVVRTYLPLSVELGPGLIGTMYDGIQRPLEEILKNTGDMIERGSSAPALDRTKKYRFYPLAKSGDMVREGDRIGCVRESVSVNHYILIPPGLSGTIHFIAEQGEYVITDTIVILDTGEEKKELTMIQRWPVRDPRPVRERLDPVEPLLTGQRIIDTLFPLARGGTAAIPGPFGSGKTVVQQQLAKWVNADIIIYIGCGERGNEMADVLEQFPTLKDPRTGHALSSRMVLIANTSNMPVAAREASVYTGITIAEYYRDMGYHVALMADSTSRWAEAMREISGRLEEMPGEEGYPAYLSSRLADFYERAGRVSLLGSGDHEGSISVIGAVSPPGGDFSEPVTQNTLRIVKVFWALDADLAYQRHFPAINWLMSYSLYSPIAGIWWEEHIGPEFIRMKQEMMEILQRENELEEIIRLVGPETLPESDRLLLLKAEILRESYLMQYAFDEFDTFTGPKKQYRMLKAIFTFFSQAERALETGISVSRLRGLPVIESFARMGTASPEEEDPLFESIARDTDAIRDLKEVL</sequence>
<gene>
    <name evidence="1" type="primary">atpA3</name>
    <name type="ordered locus">Mhun_1770</name>
</gene>
<proteinExistence type="inferred from homology"/>
<reference key="1">
    <citation type="journal article" date="2016" name="Stand. Genomic Sci.">
        <title>Complete genome sequence of Methanospirillum hungatei type strain JF1.</title>
        <authorList>
            <person name="Gunsalus R.P."/>
            <person name="Cook L.E."/>
            <person name="Crable B."/>
            <person name="Rohlin L."/>
            <person name="McDonald E."/>
            <person name="Mouttaki H."/>
            <person name="Sieber J.R."/>
            <person name="Poweleit N."/>
            <person name="Zhou H."/>
            <person name="Lapidus A.L."/>
            <person name="Daligault H.E."/>
            <person name="Land M."/>
            <person name="Gilna P."/>
            <person name="Ivanova N."/>
            <person name="Kyrpides N."/>
            <person name="Culley D.E."/>
            <person name="McInerney M.J."/>
        </authorList>
    </citation>
    <scope>NUCLEOTIDE SEQUENCE [LARGE SCALE GENOMIC DNA]</scope>
    <source>
        <strain>ATCC 27890 / DSM 864 / NBRC 100397 / JF-1</strain>
    </source>
</reference>
<dbReference type="EC" id="7.1.2.2" evidence="1"/>
<dbReference type="EMBL" id="CP000254">
    <property type="protein sequence ID" value="ABD41491.1"/>
    <property type="molecule type" value="Genomic_DNA"/>
</dbReference>
<dbReference type="RefSeq" id="WP_011448755.1">
    <property type="nucleotide sequence ID" value="NC_007796.1"/>
</dbReference>
<dbReference type="SMR" id="Q2FQE9"/>
<dbReference type="STRING" id="323259.Mhun_1770"/>
<dbReference type="EnsemblBacteria" id="ABD41491">
    <property type="protein sequence ID" value="ABD41491"/>
    <property type="gene ID" value="Mhun_1770"/>
</dbReference>
<dbReference type="GeneID" id="3924744"/>
<dbReference type="KEGG" id="mhu:Mhun_1770"/>
<dbReference type="eggNOG" id="arCOG00868">
    <property type="taxonomic scope" value="Archaea"/>
</dbReference>
<dbReference type="HOGENOM" id="CLU_008162_3_1_2"/>
<dbReference type="InParanoid" id="Q2FQE9"/>
<dbReference type="OrthoDB" id="115235at2157"/>
<dbReference type="Proteomes" id="UP000001941">
    <property type="component" value="Chromosome"/>
</dbReference>
<dbReference type="GO" id="GO:0005886">
    <property type="term" value="C:plasma membrane"/>
    <property type="evidence" value="ECO:0007669"/>
    <property type="project" value="UniProtKB-SubCell"/>
</dbReference>
<dbReference type="GO" id="GO:0005524">
    <property type="term" value="F:ATP binding"/>
    <property type="evidence" value="ECO:0007669"/>
    <property type="project" value="UniProtKB-UniRule"/>
</dbReference>
<dbReference type="GO" id="GO:0046933">
    <property type="term" value="F:proton-transporting ATP synthase activity, rotational mechanism"/>
    <property type="evidence" value="ECO:0007669"/>
    <property type="project" value="UniProtKB-UniRule"/>
</dbReference>
<dbReference type="GO" id="GO:0046961">
    <property type="term" value="F:proton-transporting ATPase activity, rotational mechanism"/>
    <property type="evidence" value="ECO:0007669"/>
    <property type="project" value="InterPro"/>
</dbReference>
<dbReference type="GO" id="GO:0042777">
    <property type="term" value="P:proton motive force-driven plasma membrane ATP synthesis"/>
    <property type="evidence" value="ECO:0007669"/>
    <property type="project" value="UniProtKB-UniRule"/>
</dbReference>
<dbReference type="CDD" id="cd18111">
    <property type="entry name" value="ATP-synt_V_A-type_alpha_C"/>
    <property type="match status" value="1"/>
</dbReference>
<dbReference type="CDD" id="cd18119">
    <property type="entry name" value="ATP-synt_V_A-type_alpha_N"/>
    <property type="match status" value="1"/>
</dbReference>
<dbReference type="CDD" id="cd01134">
    <property type="entry name" value="V_A-ATPase_A"/>
    <property type="match status" value="1"/>
</dbReference>
<dbReference type="FunFam" id="3.40.50.300:FF:000675">
    <property type="entry name" value="V-type ATP synthase alpha chain"/>
    <property type="match status" value="1"/>
</dbReference>
<dbReference type="FunFam" id="2.40.30.20:FF:000002">
    <property type="entry name" value="V-type proton ATPase catalytic subunit A"/>
    <property type="match status" value="1"/>
</dbReference>
<dbReference type="Gene3D" id="2.40.30.20">
    <property type="match status" value="1"/>
</dbReference>
<dbReference type="Gene3D" id="2.40.50.100">
    <property type="match status" value="1"/>
</dbReference>
<dbReference type="Gene3D" id="1.10.1140.10">
    <property type="entry name" value="Bovine Mitochondrial F1-atpase, Atp Synthase Beta Chain, Chain D, domain 3"/>
    <property type="match status" value="1"/>
</dbReference>
<dbReference type="Gene3D" id="3.40.50.300">
    <property type="entry name" value="P-loop containing nucleotide triphosphate hydrolases"/>
    <property type="match status" value="1"/>
</dbReference>
<dbReference type="HAMAP" id="MF_00309">
    <property type="entry name" value="ATP_synth_A_arch"/>
    <property type="match status" value="1"/>
</dbReference>
<dbReference type="InterPro" id="IPR055190">
    <property type="entry name" value="ATP-synt_VA_C"/>
</dbReference>
<dbReference type="InterPro" id="IPR031686">
    <property type="entry name" value="ATP-synth_a_Xtn"/>
</dbReference>
<dbReference type="InterPro" id="IPR023366">
    <property type="entry name" value="ATP_synth_asu-like_sf"/>
</dbReference>
<dbReference type="InterPro" id="IPR020003">
    <property type="entry name" value="ATPase_a/bsu_AS"/>
</dbReference>
<dbReference type="InterPro" id="IPR004100">
    <property type="entry name" value="ATPase_F1/V1/A1_a/bsu_N"/>
</dbReference>
<dbReference type="InterPro" id="IPR036121">
    <property type="entry name" value="ATPase_F1/V1/A1_a/bsu_N_sf"/>
</dbReference>
<dbReference type="InterPro" id="IPR000194">
    <property type="entry name" value="ATPase_F1/V1/A1_a/bsu_nucl-bd"/>
</dbReference>
<dbReference type="InterPro" id="IPR024034">
    <property type="entry name" value="ATPase_F1/V1_b/a_C"/>
</dbReference>
<dbReference type="InterPro" id="IPR027417">
    <property type="entry name" value="P-loop_NTPase"/>
</dbReference>
<dbReference type="InterPro" id="IPR022878">
    <property type="entry name" value="V-ATPase_asu"/>
</dbReference>
<dbReference type="NCBIfam" id="NF003220">
    <property type="entry name" value="PRK04192.1"/>
    <property type="match status" value="1"/>
</dbReference>
<dbReference type="PANTHER" id="PTHR43607:SF1">
    <property type="entry name" value="H(+)-TRANSPORTING TWO-SECTOR ATPASE"/>
    <property type="match status" value="1"/>
</dbReference>
<dbReference type="PANTHER" id="PTHR43607">
    <property type="entry name" value="V-TYPE PROTON ATPASE CATALYTIC SUBUNIT A"/>
    <property type="match status" value="1"/>
</dbReference>
<dbReference type="Pfam" id="PF00006">
    <property type="entry name" value="ATP-synt_ab"/>
    <property type="match status" value="1"/>
</dbReference>
<dbReference type="Pfam" id="PF02874">
    <property type="entry name" value="ATP-synt_ab_N"/>
    <property type="match status" value="1"/>
</dbReference>
<dbReference type="Pfam" id="PF16886">
    <property type="entry name" value="ATP-synt_ab_Xtn"/>
    <property type="match status" value="1"/>
</dbReference>
<dbReference type="Pfam" id="PF22919">
    <property type="entry name" value="ATP-synt_VA_C"/>
    <property type="match status" value="1"/>
</dbReference>
<dbReference type="SUPFAM" id="SSF47917">
    <property type="entry name" value="C-terminal domain of alpha and beta subunits of F1 ATP synthase"/>
    <property type="match status" value="1"/>
</dbReference>
<dbReference type="SUPFAM" id="SSF50615">
    <property type="entry name" value="N-terminal domain of alpha and beta subunits of F1 ATP synthase"/>
    <property type="match status" value="1"/>
</dbReference>
<dbReference type="SUPFAM" id="SSF52540">
    <property type="entry name" value="P-loop containing nucleoside triphosphate hydrolases"/>
    <property type="match status" value="1"/>
</dbReference>
<dbReference type="PROSITE" id="PS00152">
    <property type="entry name" value="ATPASE_ALPHA_BETA"/>
    <property type="match status" value="1"/>
</dbReference>
<evidence type="ECO:0000255" key="1">
    <source>
        <dbReference type="HAMAP-Rule" id="MF_00309"/>
    </source>
</evidence>
<comment type="function">
    <text evidence="1">Component of the A-type ATP synthase that produces ATP from ADP in the presence of a proton gradient across the membrane. The A chain is the catalytic subunit.</text>
</comment>
<comment type="catalytic activity">
    <reaction evidence="1">
        <text>ATP + H2O + 4 H(+)(in) = ADP + phosphate + 5 H(+)(out)</text>
        <dbReference type="Rhea" id="RHEA:57720"/>
        <dbReference type="ChEBI" id="CHEBI:15377"/>
        <dbReference type="ChEBI" id="CHEBI:15378"/>
        <dbReference type="ChEBI" id="CHEBI:30616"/>
        <dbReference type="ChEBI" id="CHEBI:43474"/>
        <dbReference type="ChEBI" id="CHEBI:456216"/>
        <dbReference type="EC" id="7.1.2.2"/>
    </reaction>
</comment>
<comment type="subunit">
    <text evidence="1">Has multiple subunits with at least A(3), B(3), C, D, E, F, H, I and proteolipid K(x).</text>
</comment>
<comment type="subcellular location">
    <subcellularLocation>
        <location evidence="1">Cell membrane</location>
        <topology evidence="1">Peripheral membrane protein</topology>
    </subcellularLocation>
</comment>
<comment type="similarity">
    <text evidence="1">Belongs to the ATPase alpha/beta chains family.</text>
</comment>
<organism>
    <name type="scientific">Methanospirillum hungatei JF-1 (strain ATCC 27890 / DSM 864 / NBRC 100397 / JF-1)</name>
    <dbReference type="NCBI Taxonomy" id="323259"/>
    <lineage>
        <taxon>Archaea</taxon>
        <taxon>Methanobacteriati</taxon>
        <taxon>Methanobacteriota</taxon>
        <taxon>Stenosarchaea group</taxon>
        <taxon>Methanomicrobia</taxon>
        <taxon>Methanomicrobiales</taxon>
        <taxon>Methanospirillaceae</taxon>
        <taxon>Methanospirillum</taxon>
    </lineage>
</organism>
<feature type="chain" id="PRO_0000322484" description="A-type ATP synthase subunit A 3">
    <location>
        <begin position="1"/>
        <end position="588"/>
    </location>
</feature>
<feature type="binding site" evidence="1">
    <location>
        <begin position="234"/>
        <end position="241"/>
    </location>
    <ligand>
        <name>ATP</name>
        <dbReference type="ChEBI" id="CHEBI:30616"/>
    </ligand>
</feature>
<keyword id="KW-0066">ATP synthesis</keyword>
<keyword id="KW-0067">ATP-binding</keyword>
<keyword id="KW-1003">Cell membrane</keyword>
<keyword id="KW-0375">Hydrogen ion transport</keyword>
<keyword id="KW-0406">Ion transport</keyword>
<keyword id="KW-0472">Membrane</keyword>
<keyword id="KW-0547">Nucleotide-binding</keyword>
<keyword id="KW-1185">Reference proteome</keyword>
<keyword id="KW-1278">Translocase</keyword>
<keyword id="KW-0813">Transport</keyword>
<name>AATA3_METHJ</name>
<protein>
    <recommendedName>
        <fullName evidence="1">A-type ATP synthase subunit A 3</fullName>
        <ecNumber evidence="1">7.1.2.2</ecNumber>
    </recommendedName>
</protein>
<accession>Q2FQE9</accession>